<protein>
    <recommendedName>
        <fullName>DNA polymerase I</fullName>
        <shortName>POL I</shortName>
        <ecNumber evidence="1">2.7.7.7</ecNumber>
    </recommendedName>
</protein>
<dbReference type="EC" id="2.7.7.7" evidence="1"/>
<dbReference type="EMBL" id="AJ238757">
    <property type="protein sequence ID" value="CAB56108.1"/>
    <property type="molecule type" value="Genomic_DNA"/>
</dbReference>
<dbReference type="EMBL" id="AE017197">
    <property type="protein sequence ID" value="AAU04219.1"/>
    <property type="molecule type" value="Genomic_DNA"/>
</dbReference>
<dbReference type="RefSeq" id="WP_011191194.1">
    <property type="nucleotide sequence ID" value="NC_006142.1"/>
</dbReference>
<dbReference type="SMR" id="Q9RLA0"/>
<dbReference type="KEGG" id="rty:RT0763"/>
<dbReference type="eggNOG" id="COG0258">
    <property type="taxonomic scope" value="Bacteria"/>
</dbReference>
<dbReference type="eggNOG" id="COG0749">
    <property type="taxonomic scope" value="Bacteria"/>
</dbReference>
<dbReference type="HOGENOM" id="CLU_004675_0_0_5"/>
<dbReference type="OrthoDB" id="9806424at2"/>
<dbReference type="Proteomes" id="UP000000604">
    <property type="component" value="Chromosome"/>
</dbReference>
<dbReference type="GO" id="GO:0008409">
    <property type="term" value="F:5'-3' exonuclease activity"/>
    <property type="evidence" value="ECO:0007669"/>
    <property type="project" value="InterPro"/>
</dbReference>
<dbReference type="GO" id="GO:0003677">
    <property type="term" value="F:DNA binding"/>
    <property type="evidence" value="ECO:0007669"/>
    <property type="project" value="UniProtKB-KW"/>
</dbReference>
<dbReference type="GO" id="GO:0003887">
    <property type="term" value="F:DNA-directed DNA polymerase activity"/>
    <property type="evidence" value="ECO:0007669"/>
    <property type="project" value="UniProtKB-KW"/>
</dbReference>
<dbReference type="GO" id="GO:0006261">
    <property type="term" value="P:DNA-templated DNA replication"/>
    <property type="evidence" value="ECO:0007669"/>
    <property type="project" value="InterPro"/>
</dbReference>
<dbReference type="GO" id="GO:0006302">
    <property type="term" value="P:double-strand break repair"/>
    <property type="evidence" value="ECO:0007669"/>
    <property type="project" value="TreeGrafter"/>
</dbReference>
<dbReference type="CDD" id="cd08637">
    <property type="entry name" value="DNA_pol_A_pol_I_C"/>
    <property type="match status" value="1"/>
</dbReference>
<dbReference type="CDD" id="cd09898">
    <property type="entry name" value="H3TH_53EXO"/>
    <property type="match status" value="1"/>
</dbReference>
<dbReference type="CDD" id="cd09859">
    <property type="entry name" value="PIN_53EXO"/>
    <property type="match status" value="1"/>
</dbReference>
<dbReference type="FunFam" id="1.10.150.20:FF:000002">
    <property type="entry name" value="DNA polymerase I"/>
    <property type="match status" value="1"/>
</dbReference>
<dbReference type="FunFam" id="1.10.150.20:FF:000003">
    <property type="entry name" value="DNA polymerase I"/>
    <property type="match status" value="1"/>
</dbReference>
<dbReference type="FunFam" id="1.20.1060.10:FF:000001">
    <property type="entry name" value="DNA polymerase I"/>
    <property type="match status" value="1"/>
</dbReference>
<dbReference type="Gene3D" id="3.30.70.370">
    <property type="match status" value="1"/>
</dbReference>
<dbReference type="Gene3D" id="1.10.150.20">
    <property type="entry name" value="5' to 3' exonuclease, C-terminal subdomain"/>
    <property type="match status" value="2"/>
</dbReference>
<dbReference type="Gene3D" id="3.40.50.1010">
    <property type="entry name" value="5'-nuclease"/>
    <property type="match status" value="1"/>
</dbReference>
<dbReference type="Gene3D" id="3.30.420.10">
    <property type="entry name" value="Ribonuclease H-like superfamily/Ribonuclease H"/>
    <property type="match status" value="1"/>
</dbReference>
<dbReference type="Gene3D" id="1.20.1060.10">
    <property type="entry name" value="Taq DNA Polymerase, Chain T, domain 4"/>
    <property type="match status" value="1"/>
</dbReference>
<dbReference type="InterPro" id="IPR020046">
    <property type="entry name" value="5-3_exonucl_a-hlix_arch_N"/>
</dbReference>
<dbReference type="InterPro" id="IPR002421">
    <property type="entry name" value="5-3_exonuclease"/>
</dbReference>
<dbReference type="InterPro" id="IPR036279">
    <property type="entry name" value="5-3_exonuclease_C_sf"/>
</dbReference>
<dbReference type="InterPro" id="IPR019760">
    <property type="entry name" value="DNA-dir_DNA_pol_A_CS"/>
</dbReference>
<dbReference type="InterPro" id="IPR001098">
    <property type="entry name" value="DNA-dir_DNA_pol_A_palm_dom"/>
</dbReference>
<dbReference type="InterPro" id="IPR043502">
    <property type="entry name" value="DNA/RNA_pol_sf"/>
</dbReference>
<dbReference type="InterPro" id="IPR020045">
    <property type="entry name" value="DNA_polI_H3TH"/>
</dbReference>
<dbReference type="InterPro" id="IPR018320">
    <property type="entry name" value="DNA_polymerase_1"/>
</dbReference>
<dbReference type="InterPro" id="IPR002298">
    <property type="entry name" value="DNA_polymerase_A"/>
</dbReference>
<dbReference type="InterPro" id="IPR008918">
    <property type="entry name" value="HhH2"/>
</dbReference>
<dbReference type="InterPro" id="IPR029060">
    <property type="entry name" value="PIN-like_dom_sf"/>
</dbReference>
<dbReference type="InterPro" id="IPR036397">
    <property type="entry name" value="RNaseH_sf"/>
</dbReference>
<dbReference type="NCBIfam" id="TIGR00593">
    <property type="entry name" value="pola"/>
    <property type="match status" value="1"/>
</dbReference>
<dbReference type="PANTHER" id="PTHR10133">
    <property type="entry name" value="DNA POLYMERASE I"/>
    <property type="match status" value="1"/>
</dbReference>
<dbReference type="PANTHER" id="PTHR10133:SF27">
    <property type="entry name" value="DNA POLYMERASE NU"/>
    <property type="match status" value="1"/>
</dbReference>
<dbReference type="Pfam" id="PF01367">
    <property type="entry name" value="5_3_exonuc"/>
    <property type="match status" value="1"/>
</dbReference>
<dbReference type="Pfam" id="PF02739">
    <property type="entry name" value="5_3_exonuc_N"/>
    <property type="match status" value="1"/>
</dbReference>
<dbReference type="Pfam" id="PF00476">
    <property type="entry name" value="DNA_pol_A"/>
    <property type="match status" value="1"/>
</dbReference>
<dbReference type="PRINTS" id="PR00868">
    <property type="entry name" value="DNAPOLI"/>
</dbReference>
<dbReference type="SMART" id="SM00475">
    <property type="entry name" value="53EXOc"/>
    <property type="match status" value="1"/>
</dbReference>
<dbReference type="SMART" id="SM00279">
    <property type="entry name" value="HhH2"/>
    <property type="match status" value="1"/>
</dbReference>
<dbReference type="SMART" id="SM00482">
    <property type="entry name" value="POLAc"/>
    <property type="match status" value="1"/>
</dbReference>
<dbReference type="SUPFAM" id="SSF47807">
    <property type="entry name" value="5' to 3' exonuclease, C-terminal subdomain"/>
    <property type="match status" value="1"/>
</dbReference>
<dbReference type="SUPFAM" id="SSF56672">
    <property type="entry name" value="DNA/RNA polymerases"/>
    <property type="match status" value="1"/>
</dbReference>
<dbReference type="SUPFAM" id="SSF88723">
    <property type="entry name" value="PIN domain-like"/>
    <property type="match status" value="1"/>
</dbReference>
<dbReference type="PROSITE" id="PS00447">
    <property type="entry name" value="DNA_POLYMERASE_A"/>
    <property type="match status" value="1"/>
</dbReference>
<gene>
    <name type="primary">polA</name>
    <name type="ordered locus">RT0763</name>
</gene>
<name>DPO1_RICTY</name>
<keyword id="KW-0227">DNA damage</keyword>
<keyword id="KW-0234">DNA repair</keyword>
<keyword id="KW-0235">DNA replication</keyword>
<keyword id="KW-0238">DNA-binding</keyword>
<keyword id="KW-0239">DNA-directed DNA polymerase</keyword>
<keyword id="KW-0269">Exonuclease</keyword>
<keyword id="KW-0378">Hydrolase</keyword>
<keyword id="KW-0540">Nuclease</keyword>
<keyword id="KW-0548">Nucleotidyltransferase</keyword>
<keyword id="KW-0808">Transferase</keyword>
<feature type="chain" id="PRO_0000280951" description="DNA polymerase I">
    <location>
        <begin position="1"/>
        <end position="872"/>
    </location>
</feature>
<feature type="domain" description="5'-3' exonuclease">
    <location>
        <begin position="1"/>
        <end position="283"/>
    </location>
</feature>
<accession>Q9RLA0</accession>
<proteinExistence type="inferred from homology"/>
<organism>
    <name type="scientific">Rickettsia typhi (strain ATCC VR-144 / Wilmington)</name>
    <dbReference type="NCBI Taxonomy" id="257363"/>
    <lineage>
        <taxon>Bacteria</taxon>
        <taxon>Pseudomonadati</taxon>
        <taxon>Pseudomonadota</taxon>
        <taxon>Alphaproteobacteria</taxon>
        <taxon>Rickettsiales</taxon>
        <taxon>Rickettsiaceae</taxon>
        <taxon>Rickettsieae</taxon>
        <taxon>Rickettsia</taxon>
        <taxon>typhus group</taxon>
    </lineage>
</organism>
<comment type="function">
    <text evidence="1">In addition to polymerase activity, this DNA polymerase exhibits 5'-3' exonuclease activity.</text>
</comment>
<comment type="catalytic activity">
    <reaction evidence="1">
        <text>DNA(n) + a 2'-deoxyribonucleoside 5'-triphosphate = DNA(n+1) + diphosphate</text>
        <dbReference type="Rhea" id="RHEA:22508"/>
        <dbReference type="Rhea" id="RHEA-COMP:17339"/>
        <dbReference type="Rhea" id="RHEA-COMP:17340"/>
        <dbReference type="ChEBI" id="CHEBI:33019"/>
        <dbReference type="ChEBI" id="CHEBI:61560"/>
        <dbReference type="ChEBI" id="CHEBI:173112"/>
        <dbReference type="EC" id="2.7.7.7"/>
    </reaction>
</comment>
<comment type="subunit">
    <text evidence="1">Single-chain monomer with multiple functions.</text>
</comment>
<comment type="similarity">
    <text evidence="2">Belongs to the DNA polymerase type-A family.</text>
</comment>
<reference key="1">
    <citation type="journal article" date="1999" name="Mol. Biol. Evol.">
        <title>Genome degradation is an ongoing process in Rickettsia.</title>
        <authorList>
            <person name="Andersson J.O."/>
            <person name="Andersson S.G.E."/>
        </authorList>
    </citation>
    <scope>NUCLEOTIDE SEQUENCE [GENOMIC DNA]</scope>
    <source>
        <strain>ATCC VR-144 / Wilmington</strain>
    </source>
</reference>
<reference key="2">
    <citation type="journal article" date="2004" name="J. Bacteriol.">
        <title>Complete genome sequence of Rickettsia typhi and comparison with sequences of other Rickettsiae.</title>
        <authorList>
            <person name="McLeod M.P."/>
            <person name="Qin X."/>
            <person name="Karpathy S.E."/>
            <person name="Gioia J."/>
            <person name="Highlander S.K."/>
            <person name="Fox G.E."/>
            <person name="McNeill T.Z."/>
            <person name="Jiang H."/>
            <person name="Muzny D."/>
            <person name="Jacob L.S."/>
            <person name="Hawes A.C."/>
            <person name="Sodergren E."/>
            <person name="Gill R."/>
            <person name="Hume J."/>
            <person name="Morgan M."/>
            <person name="Fan G."/>
            <person name="Amin A.G."/>
            <person name="Gibbs R.A."/>
            <person name="Hong C."/>
            <person name="Yu X.-J."/>
            <person name="Walker D.H."/>
            <person name="Weinstock G.M."/>
        </authorList>
    </citation>
    <scope>NUCLEOTIDE SEQUENCE [LARGE SCALE GENOMIC DNA]</scope>
    <source>
        <strain>ATCC VR-144 / Wilmington</strain>
    </source>
</reference>
<evidence type="ECO:0000250" key="1">
    <source>
        <dbReference type="UniProtKB" id="P52026"/>
    </source>
</evidence>
<evidence type="ECO:0000305" key="2"/>
<sequence length="872" mass="99310">MTKKNTLLLIDGYGFVFRAYYAQQSLSSAKGEPVGALYGFTSMLLKLLSDFKPQYGAIVFDSGGKNFRHKIYQNYKANRPTPPEDLIGQLPLIRDVASHLNFAILEKNGYEADDIIATFATKTITLGKEVIIISSDKDLLQLMSKNIKIYDPIKCKYITEDDVIIKFGTTPDKLREVMALIGDRSDNIPGVPSIGPKTASSLITQFGSVENIFNSLDQISSIKQRKTLQNSREAALISWRLIGLDSNVDLDFNLNNLEWSHPNSEKLIGFLQKYGFKSLYKRVENLFYIKINDHEEIVDNKVTEAKEISNASELENFAKEAEKIGIFGIYLLQQKGNNCALILSLQNQSYIIKITNNNLFPYNDNIKNNNDWFSYIILNLLTNKSIKKITYSLKHLLKFYANQSHKITAIEDLELMQYTLSAGLVQKNLFAETLTKDNIINESAKIVINFISLYKQTLLALQKNKAFRLYREIDLPTCFILDKMEKIGIKVDANYLHQLSDEFGTEILKIEEEIFALSGTKFNIASQKQLSEILFKKMQLPSGNTLAKTSSYSTKAGILKKLSEDGYHIATLLLRWRQLTKLKNTYTDSLPKQINNITKRIHTTFLQTSTTTGRLSSQEPNLQNIPTRSSDGNKIRQAFIAEDGYKLISADYSQIELRILSHIANVDVLKQAFINKEDIHTQTACQIFNLQKHELTSEHRRKAKAINFGIIYGISAFGLAKQLNVSNGTAAEYIKQYFAEYKGMQEYMVQTKAYANRNGYVTNFFGRKCFIPLIHDKKLKQFAERAAINAPIQGTSADIIKIAMIKLAQEIEKRKLKTRLILQIHDELLFEVPEIELELVIPIIKKIMEYSTNIDVPIITEIRAGNNWKEIH</sequence>